<sequence>MKHIYEKGTSDNVLLLLHGTGGNEHDLLSLGRFIDPDAHLLGVRGSVLENGMPRFFKRLSEGVFDEKDLVVRTRELKDFIDEAAETHQFNRGRVIAVGYSNGANIAASLLFHYKDVLKGAILHHPMVPIRGIELPDMAGLPVFIGAGKYDPLCTKEESEELYRYLRDSGASASVYWQDGGHQLTQHEAEQAREWYKEAIV</sequence>
<feature type="chain" id="PRO_0000381993" description="Putative hydrolase MhqD">
    <location>
        <begin position="1"/>
        <end position="200"/>
    </location>
</feature>
<feature type="active site" description="Charge relay system" evidence="1">
    <location>
        <position position="100"/>
    </location>
</feature>
<feature type="active site" description="Charge relay system" evidence="1">
    <location>
        <position position="150"/>
    </location>
</feature>
<feature type="active site" description="Charge relay system" evidence="1">
    <location>
        <position position="181"/>
    </location>
</feature>
<keyword id="KW-0058">Aromatic hydrocarbons catabolism</keyword>
<keyword id="KW-0963">Cytoplasm</keyword>
<keyword id="KW-0216">Detoxification</keyword>
<keyword id="KW-0378">Hydrolase</keyword>
<keyword id="KW-1185">Reference proteome</keyword>
<comment type="function">
    <text evidence="4">Putative hydrolase that may contribute to the degradation of aromatic compounds.</text>
</comment>
<comment type="subcellular location">
    <subcellularLocation>
        <location evidence="2 3">Cytoplasm</location>
    </subcellularLocation>
</comment>
<comment type="induction">
    <text evidence="2 3">Repressed by MhqR. Strongly induced by stress due to exposure to 2-methylhydroquinone (2-MHQ) and less strongly induced after diamide or catechol stress. Not induced by oxidative stress due to hydrogen peroxide or methylglyoxal.</text>
</comment>
<comment type="similarity">
    <text evidence="4">Belongs to the AB hydrolase superfamily. AB hydrolase 2 family.</text>
</comment>
<name>MHQD_BACSU</name>
<accession>O34842</accession>
<accession>Q796B9</accession>
<proteinExistence type="evidence at transcript level"/>
<gene>
    <name type="primary">mhqD</name>
    <name type="synonym">yodD</name>
    <name type="synonym">yolF</name>
    <name type="ordered locus">BSU19560</name>
</gene>
<evidence type="ECO:0000250" key="1"/>
<evidence type="ECO:0000269" key="2">
    <source>
    </source>
</evidence>
<evidence type="ECO:0000269" key="3">
    <source>
    </source>
</evidence>
<evidence type="ECO:0000305" key="4"/>
<organism>
    <name type="scientific">Bacillus subtilis (strain 168)</name>
    <dbReference type="NCBI Taxonomy" id="224308"/>
    <lineage>
        <taxon>Bacteria</taxon>
        <taxon>Bacillati</taxon>
        <taxon>Bacillota</taxon>
        <taxon>Bacilli</taxon>
        <taxon>Bacillales</taxon>
        <taxon>Bacillaceae</taxon>
        <taxon>Bacillus</taxon>
    </lineage>
</organism>
<protein>
    <recommendedName>
        <fullName>Putative hydrolase MhqD</fullName>
        <ecNumber>3.1.-.-</ecNumber>
    </recommendedName>
</protein>
<dbReference type="EC" id="3.1.-.-"/>
<dbReference type="EMBL" id="AF015775">
    <property type="protein sequence ID" value="AAB72061.1"/>
    <property type="molecule type" value="Genomic_DNA"/>
</dbReference>
<dbReference type="EMBL" id="AF006665">
    <property type="protein sequence ID" value="AAB81172.1"/>
    <property type="molecule type" value="Genomic_DNA"/>
</dbReference>
<dbReference type="EMBL" id="AL009126">
    <property type="protein sequence ID" value="CAB13847.1"/>
    <property type="molecule type" value="Genomic_DNA"/>
</dbReference>
<dbReference type="PIR" id="A69903">
    <property type="entry name" value="A69903"/>
</dbReference>
<dbReference type="RefSeq" id="NP_389837.1">
    <property type="nucleotide sequence ID" value="NC_000964.3"/>
</dbReference>
<dbReference type="RefSeq" id="WP_003231194.1">
    <property type="nucleotide sequence ID" value="NZ_OZ025638.1"/>
</dbReference>
<dbReference type="SMR" id="O34842"/>
<dbReference type="FunCoup" id="O34842">
    <property type="interactions" value="20"/>
</dbReference>
<dbReference type="STRING" id="224308.BSU19560"/>
<dbReference type="ESTHER" id="bacsu-MHQD">
    <property type="family name" value="LYsophospholipase_carboxylesterase"/>
</dbReference>
<dbReference type="PaxDb" id="224308-BSU19560"/>
<dbReference type="EnsemblBacteria" id="CAB13847">
    <property type="protein sequence ID" value="CAB13847"/>
    <property type="gene ID" value="BSU_19560"/>
</dbReference>
<dbReference type="GeneID" id="940106"/>
<dbReference type="KEGG" id="bsu:BSU19560"/>
<dbReference type="PATRIC" id="fig|224308.179.peg.2138"/>
<dbReference type="eggNOG" id="COG0400">
    <property type="taxonomic scope" value="Bacteria"/>
</dbReference>
<dbReference type="InParanoid" id="O34842"/>
<dbReference type="OrthoDB" id="9796570at2"/>
<dbReference type="PhylomeDB" id="O34842"/>
<dbReference type="BioCyc" id="BSUB:BSU19560-MONOMER"/>
<dbReference type="Proteomes" id="UP000001570">
    <property type="component" value="Chromosome"/>
</dbReference>
<dbReference type="GO" id="GO:0005737">
    <property type="term" value="C:cytoplasm"/>
    <property type="evidence" value="ECO:0007669"/>
    <property type="project" value="UniProtKB-SubCell"/>
</dbReference>
<dbReference type="GO" id="GO:0016787">
    <property type="term" value="F:hydrolase activity"/>
    <property type="evidence" value="ECO:0007669"/>
    <property type="project" value="UniProtKB-KW"/>
</dbReference>
<dbReference type="GO" id="GO:0009056">
    <property type="term" value="P:catabolic process"/>
    <property type="evidence" value="ECO:0007669"/>
    <property type="project" value="UniProtKB-KW"/>
</dbReference>
<dbReference type="GO" id="GO:0009636">
    <property type="term" value="P:response to toxic substance"/>
    <property type="evidence" value="ECO:0007669"/>
    <property type="project" value="UniProtKB-KW"/>
</dbReference>
<dbReference type="Gene3D" id="3.40.50.1820">
    <property type="entry name" value="alpha/beta hydrolase"/>
    <property type="match status" value="1"/>
</dbReference>
<dbReference type="InterPro" id="IPR029058">
    <property type="entry name" value="AB_hydrolase_fold"/>
</dbReference>
<dbReference type="InterPro" id="IPR002925">
    <property type="entry name" value="Dienelactn_hydro"/>
</dbReference>
<dbReference type="Pfam" id="PF01738">
    <property type="entry name" value="DLH"/>
    <property type="match status" value="1"/>
</dbReference>
<dbReference type="SUPFAM" id="SSF53474">
    <property type="entry name" value="alpha/beta-Hydrolases"/>
    <property type="match status" value="1"/>
</dbReference>
<reference key="1">
    <citation type="submission" date="1997-06" db="EMBL/GenBank/DDBJ databases">
        <title>Sequence analysis of the 30 kb region (182') of the Bacillus subtilis chromosome containing the cge cluster.</title>
        <authorList>
            <person name="Ghim S.-Y."/>
            <person name="Jeong Y.-M."/>
            <person name="Choi S.-K."/>
            <person name="Park S.-H."/>
        </authorList>
    </citation>
    <scope>NUCLEOTIDE SEQUENCE [GENOMIC DNA]</scope>
    <source>
        <strain>168</strain>
    </source>
</reference>
<reference key="2">
    <citation type="journal article" date="1998" name="DNA Res.">
        <title>Sequence analysis of the Bacillus subtilis 168 chromosome region between the sspC and odhA loci (184 degrees-180 degrees).</title>
        <authorList>
            <person name="Ghim S.-Y."/>
            <person name="Choi S.-K."/>
            <person name="Shin B.-S."/>
            <person name="Jeong Y.-M."/>
            <person name="Sorokin A."/>
            <person name="Ehrlich S.D."/>
            <person name="Park S.-H."/>
        </authorList>
    </citation>
    <scope>NUCLEOTIDE SEQUENCE [GENOMIC DNA]</scope>
    <source>
        <strain>168</strain>
    </source>
</reference>
<reference key="3">
    <citation type="journal article" date="1997" name="Nature">
        <title>The complete genome sequence of the Gram-positive bacterium Bacillus subtilis.</title>
        <authorList>
            <person name="Kunst F."/>
            <person name="Ogasawara N."/>
            <person name="Moszer I."/>
            <person name="Albertini A.M."/>
            <person name="Alloni G."/>
            <person name="Azevedo V."/>
            <person name="Bertero M.G."/>
            <person name="Bessieres P."/>
            <person name="Bolotin A."/>
            <person name="Borchert S."/>
            <person name="Borriss R."/>
            <person name="Boursier L."/>
            <person name="Brans A."/>
            <person name="Braun M."/>
            <person name="Brignell S.C."/>
            <person name="Bron S."/>
            <person name="Brouillet S."/>
            <person name="Bruschi C.V."/>
            <person name="Caldwell B."/>
            <person name="Capuano V."/>
            <person name="Carter N.M."/>
            <person name="Choi S.-K."/>
            <person name="Codani J.-J."/>
            <person name="Connerton I.F."/>
            <person name="Cummings N.J."/>
            <person name="Daniel R.A."/>
            <person name="Denizot F."/>
            <person name="Devine K.M."/>
            <person name="Duesterhoeft A."/>
            <person name="Ehrlich S.D."/>
            <person name="Emmerson P.T."/>
            <person name="Entian K.-D."/>
            <person name="Errington J."/>
            <person name="Fabret C."/>
            <person name="Ferrari E."/>
            <person name="Foulger D."/>
            <person name="Fritz C."/>
            <person name="Fujita M."/>
            <person name="Fujita Y."/>
            <person name="Fuma S."/>
            <person name="Galizzi A."/>
            <person name="Galleron N."/>
            <person name="Ghim S.-Y."/>
            <person name="Glaser P."/>
            <person name="Goffeau A."/>
            <person name="Golightly E.J."/>
            <person name="Grandi G."/>
            <person name="Guiseppi G."/>
            <person name="Guy B.J."/>
            <person name="Haga K."/>
            <person name="Haiech J."/>
            <person name="Harwood C.R."/>
            <person name="Henaut A."/>
            <person name="Hilbert H."/>
            <person name="Holsappel S."/>
            <person name="Hosono S."/>
            <person name="Hullo M.-F."/>
            <person name="Itaya M."/>
            <person name="Jones L.-M."/>
            <person name="Joris B."/>
            <person name="Karamata D."/>
            <person name="Kasahara Y."/>
            <person name="Klaerr-Blanchard M."/>
            <person name="Klein C."/>
            <person name="Kobayashi Y."/>
            <person name="Koetter P."/>
            <person name="Koningstein G."/>
            <person name="Krogh S."/>
            <person name="Kumano M."/>
            <person name="Kurita K."/>
            <person name="Lapidus A."/>
            <person name="Lardinois S."/>
            <person name="Lauber J."/>
            <person name="Lazarevic V."/>
            <person name="Lee S.-M."/>
            <person name="Levine A."/>
            <person name="Liu H."/>
            <person name="Masuda S."/>
            <person name="Mauel C."/>
            <person name="Medigue C."/>
            <person name="Medina N."/>
            <person name="Mellado R.P."/>
            <person name="Mizuno M."/>
            <person name="Moestl D."/>
            <person name="Nakai S."/>
            <person name="Noback M."/>
            <person name="Noone D."/>
            <person name="O'Reilly M."/>
            <person name="Ogawa K."/>
            <person name="Ogiwara A."/>
            <person name="Oudega B."/>
            <person name="Park S.-H."/>
            <person name="Parro V."/>
            <person name="Pohl T.M."/>
            <person name="Portetelle D."/>
            <person name="Porwollik S."/>
            <person name="Prescott A.M."/>
            <person name="Presecan E."/>
            <person name="Pujic P."/>
            <person name="Purnelle B."/>
            <person name="Rapoport G."/>
            <person name="Rey M."/>
            <person name="Reynolds S."/>
            <person name="Rieger M."/>
            <person name="Rivolta C."/>
            <person name="Rocha E."/>
            <person name="Roche B."/>
            <person name="Rose M."/>
            <person name="Sadaie Y."/>
            <person name="Sato T."/>
            <person name="Scanlan E."/>
            <person name="Schleich S."/>
            <person name="Schroeter R."/>
            <person name="Scoffone F."/>
            <person name="Sekiguchi J."/>
            <person name="Sekowska A."/>
            <person name="Seror S.J."/>
            <person name="Serror P."/>
            <person name="Shin B.-S."/>
            <person name="Soldo B."/>
            <person name="Sorokin A."/>
            <person name="Tacconi E."/>
            <person name="Takagi T."/>
            <person name="Takahashi H."/>
            <person name="Takemaru K."/>
            <person name="Takeuchi M."/>
            <person name="Tamakoshi A."/>
            <person name="Tanaka T."/>
            <person name="Terpstra P."/>
            <person name="Tognoni A."/>
            <person name="Tosato V."/>
            <person name="Uchiyama S."/>
            <person name="Vandenbol M."/>
            <person name="Vannier F."/>
            <person name="Vassarotti A."/>
            <person name="Viari A."/>
            <person name="Wambutt R."/>
            <person name="Wedler E."/>
            <person name="Wedler H."/>
            <person name="Weitzenegger T."/>
            <person name="Winters P."/>
            <person name="Wipat A."/>
            <person name="Yamamoto H."/>
            <person name="Yamane K."/>
            <person name="Yasumoto K."/>
            <person name="Yata K."/>
            <person name="Yoshida K."/>
            <person name="Yoshikawa H.-F."/>
            <person name="Zumstein E."/>
            <person name="Yoshikawa H."/>
            <person name="Danchin A."/>
        </authorList>
    </citation>
    <scope>NUCLEOTIDE SEQUENCE [LARGE SCALE GENOMIC DNA]</scope>
    <source>
        <strain>168</strain>
    </source>
</reference>
<reference key="4">
    <citation type="journal article" date="2007" name="Mol. Microbiol.">
        <title>The MarR-type repressor MhqR (YkvE) regulates multiple dioxygenases/glyoxalases and an azoreductase which confer resistance to 2-methylhydroquinone and catechol in Bacillus subtilis.</title>
        <authorList>
            <person name="Toewe S."/>
            <person name="Leelakriangsak M."/>
            <person name="Kobayashi K."/>
            <person name="Van Duy N."/>
            <person name="Hecker M."/>
            <person name="Zuber P."/>
            <person name="Antelmann H."/>
        </authorList>
    </citation>
    <scope>INDUCTION</scope>
    <scope>SUBCELLULAR LOCATION</scope>
    <source>
        <strain>168</strain>
    </source>
</reference>
<reference key="5">
    <citation type="journal article" date="2007" name="Proteomics">
        <title>Transcriptome and proteome analyses in response to 2-methylhydroquinone and 6-brom-2-vinyl-chroman-4-on reveal different degradation systems involved in the catabolism of aromatic compounds in Bacillus subtilis.</title>
        <authorList>
            <person name="Nguyen V.D."/>
            <person name="Wolf C."/>
            <person name="Maeder U."/>
            <person name="Lalk M."/>
            <person name="Langer P."/>
            <person name="Lindequist U."/>
            <person name="Hecker M."/>
            <person name="Antelmann H."/>
        </authorList>
    </citation>
    <scope>INDUCTION</scope>
    <scope>SUBCELLULAR LOCATION</scope>
    <scope>NOMENCLATURE</scope>
    <source>
        <strain>168</strain>
    </source>
</reference>